<evidence type="ECO:0000255" key="1">
    <source>
        <dbReference type="HAMAP-Rule" id="MF_01588"/>
    </source>
</evidence>
<dbReference type="EC" id="6.5.1.2" evidence="1"/>
<dbReference type="EMBL" id="CP001072">
    <property type="protein sequence ID" value="ACD48194.1"/>
    <property type="molecule type" value="Genomic_DNA"/>
</dbReference>
<dbReference type="RefSeq" id="WP_000597606.1">
    <property type="nucleotide sequence ID" value="NC_010698.2"/>
</dbReference>
<dbReference type="SMR" id="B2UTL2"/>
<dbReference type="KEGG" id="hps:HPSH_03795"/>
<dbReference type="HOGENOM" id="CLU_007764_2_1_7"/>
<dbReference type="GO" id="GO:0005829">
    <property type="term" value="C:cytosol"/>
    <property type="evidence" value="ECO:0007669"/>
    <property type="project" value="TreeGrafter"/>
</dbReference>
<dbReference type="GO" id="GO:0003677">
    <property type="term" value="F:DNA binding"/>
    <property type="evidence" value="ECO:0007669"/>
    <property type="project" value="InterPro"/>
</dbReference>
<dbReference type="GO" id="GO:0003911">
    <property type="term" value="F:DNA ligase (NAD+) activity"/>
    <property type="evidence" value="ECO:0007669"/>
    <property type="project" value="UniProtKB-UniRule"/>
</dbReference>
<dbReference type="GO" id="GO:0046872">
    <property type="term" value="F:metal ion binding"/>
    <property type="evidence" value="ECO:0007669"/>
    <property type="project" value="UniProtKB-KW"/>
</dbReference>
<dbReference type="GO" id="GO:0006281">
    <property type="term" value="P:DNA repair"/>
    <property type="evidence" value="ECO:0007669"/>
    <property type="project" value="UniProtKB-KW"/>
</dbReference>
<dbReference type="GO" id="GO:0006260">
    <property type="term" value="P:DNA replication"/>
    <property type="evidence" value="ECO:0007669"/>
    <property type="project" value="UniProtKB-KW"/>
</dbReference>
<dbReference type="CDD" id="cd17748">
    <property type="entry name" value="BRCT_DNA_ligase_like"/>
    <property type="match status" value="1"/>
</dbReference>
<dbReference type="CDD" id="cd00114">
    <property type="entry name" value="LIGANc"/>
    <property type="match status" value="1"/>
</dbReference>
<dbReference type="FunFam" id="1.10.150.20:FF:000007">
    <property type="entry name" value="DNA ligase"/>
    <property type="match status" value="1"/>
</dbReference>
<dbReference type="FunFam" id="2.40.50.140:FF:000012">
    <property type="entry name" value="DNA ligase"/>
    <property type="match status" value="1"/>
</dbReference>
<dbReference type="FunFam" id="3.30.470.30:FF:000034">
    <property type="entry name" value="DNA ligase"/>
    <property type="match status" value="1"/>
</dbReference>
<dbReference type="FunFam" id="3.40.50.10190:FF:000069">
    <property type="entry name" value="DNA ligase"/>
    <property type="match status" value="1"/>
</dbReference>
<dbReference type="Gene3D" id="1.10.150.20">
    <property type="entry name" value="5' to 3' exonuclease, C-terminal subdomain"/>
    <property type="match status" value="2"/>
</dbReference>
<dbReference type="Gene3D" id="3.40.50.10190">
    <property type="entry name" value="BRCT domain"/>
    <property type="match status" value="1"/>
</dbReference>
<dbReference type="Gene3D" id="3.30.470.30">
    <property type="entry name" value="DNA ligase/mRNA capping enzyme"/>
    <property type="match status" value="1"/>
</dbReference>
<dbReference type="Gene3D" id="1.10.287.610">
    <property type="entry name" value="Helix hairpin bin"/>
    <property type="match status" value="1"/>
</dbReference>
<dbReference type="Gene3D" id="2.40.50.140">
    <property type="entry name" value="Nucleic acid-binding proteins"/>
    <property type="match status" value="1"/>
</dbReference>
<dbReference type="HAMAP" id="MF_01588">
    <property type="entry name" value="DNA_ligase_A"/>
    <property type="match status" value="1"/>
</dbReference>
<dbReference type="InterPro" id="IPR001357">
    <property type="entry name" value="BRCT_dom"/>
</dbReference>
<dbReference type="InterPro" id="IPR036420">
    <property type="entry name" value="BRCT_dom_sf"/>
</dbReference>
<dbReference type="InterPro" id="IPR001679">
    <property type="entry name" value="DNA_ligase"/>
</dbReference>
<dbReference type="InterPro" id="IPR018239">
    <property type="entry name" value="DNA_ligase_AS"/>
</dbReference>
<dbReference type="InterPro" id="IPR033136">
    <property type="entry name" value="DNA_ligase_CS"/>
</dbReference>
<dbReference type="InterPro" id="IPR013839">
    <property type="entry name" value="DNAligase_adenylation"/>
</dbReference>
<dbReference type="InterPro" id="IPR013840">
    <property type="entry name" value="DNAligase_N"/>
</dbReference>
<dbReference type="InterPro" id="IPR003583">
    <property type="entry name" value="Hlx-hairpin-Hlx_DNA-bd_motif"/>
</dbReference>
<dbReference type="InterPro" id="IPR012340">
    <property type="entry name" value="NA-bd_OB-fold"/>
</dbReference>
<dbReference type="InterPro" id="IPR004150">
    <property type="entry name" value="NAD_DNA_ligase_OB"/>
</dbReference>
<dbReference type="InterPro" id="IPR010994">
    <property type="entry name" value="RuvA_2-like"/>
</dbReference>
<dbReference type="NCBIfam" id="TIGR00575">
    <property type="entry name" value="dnlj"/>
    <property type="match status" value="1"/>
</dbReference>
<dbReference type="NCBIfam" id="NF005932">
    <property type="entry name" value="PRK07956.1"/>
    <property type="match status" value="1"/>
</dbReference>
<dbReference type="PANTHER" id="PTHR23389">
    <property type="entry name" value="CHROMOSOME TRANSMISSION FIDELITY FACTOR 18"/>
    <property type="match status" value="1"/>
</dbReference>
<dbReference type="PANTHER" id="PTHR23389:SF9">
    <property type="entry name" value="DNA LIGASE"/>
    <property type="match status" value="1"/>
</dbReference>
<dbReference type="Pfam" id="PF00533">
    <property type="entry name" value="BRCT"/>
    <property type="match status" value="1"/>
</dbReference>
<dbReference type="Pfam" id="PF01653">
    <property type="entry name" value="DNA_ligase_aden"/>
    <property type="match status" value="1"/>
</dbReference>
<dbReference type="Pfam" id="PF03120">
    <property type="entry name" value="DNA_ligase_OB"/>
    <property type="match status" value="1"/>
</dbReference>
<dbReference type="PIRSF" id="PIRSF001604">
    <property type="entry name" value="LigA"/>
    <property type="match status" value="1"/>
</dbReference>
<dbReference type="SMART" id="SM00292">
    <property type="entry name" value="BRCT"/>
    <property type="match status" value="1"/>
</dbReference>
<dbReference type="SMART" id="SM00278">
    <property type="entry name" value="HhH1"/>
    <property type="match status" value="3"/>
</dbReference>
<dbReference type="SMART" id="SM00532">
    <property type="entry name" value="LIGANc"/>
    <property type="match status" value="1"/>
</dbReference>
<dbReference type="SUPFAM" id="SSF52113">
    <property type="entry name" value="BRCT domain"/>
    <property type="match status" value="1"/>
</dbReference>
<dbReference type="SUPFAM" id="SSF56091">
    <property type="entry name" value="DNA ligase/mRNA capping enzyme, catalytic domain"/>
    <property type="match status" value="1"/>
</dbReference>
<dbReference type="SUPFAM" id="SSF50249">
    <property type="entry name" value="Nucleic acid-binding proteins"/>
    <property type="match status" value="1"/>
</dbReference>
<dbReference type="SUPFAM" id="SSF47781">
    <property type="entry name" value="RuvA domain 2-like"/>
    <property type="match status" value="1"/>
</dbReference>
<dbReference type="PROSITE" id="PS50172">
    <property type="entry name" value="BRCT"/>
    <property type="match status" value="1"/>
</dbReference>
<dbReference type="PROSITE" id="PS01055">
    <property type="entry name" value="DNA_LIGASE_N1"/>
    <property type="match status" value="1"/>
</dbReference>
<dbReference type="PROSITE" id="PS01056">
    <property type="entry name" value="DNA_LIGASE_N2"/>
    <property type="match status" value="1"/>
</dbReference>
<reference key="1">
    <citation type="submission" date="2008-05" db="EMBL/GenBank/DDBJ databases">
        <title>Genome sequence of Helicobacter pylori from the remote Amazon: traces of Asian ancestry of the first Americans.</title>
        <authorList>
            <person name="Kersulyte D."/>
            <person name="Kalia A."/>
            <person name="Gilman R.H."/>
            <person name="Berg D.E."/>
        </authorList>
    </citation>
    <scope>NUCLEOTIDE SEQUENCE [LARGE SCALE GENOMIC DNA]</scope>
    <source>
        <strain>Shi470</strain>
    </source>
</reference>
<organism>
    <name type="scientific">Helicobacter pylori (strain Shi470)</name>
    <dbReference type="NCBI Taxonomy" id="512562"/>
    <lineage>
        <taxon>Bacteria</taxon>
        <taxon>Pseudomonadati</taxon>
        <taxon>Campylobacterota</taxon>
        <taxon>Epsilonproteobacteria</taxon>
        <taxon>Campylobacterales</taxon>
        <taxon>Helicobacteraceae</taxon>
        <taxon>Helicobacter</taxon>
    </lineage>
</organism>
<feature type="chain" id="PRO_0000380398" description="DNA ligase">
    <location>
        <begin position="1"/>
        <end position="656"/>
    </location>
</feature>
<feature type="domain" description="BRCT" evidence="1">
    <location>
        <begin position="577"/>
        <end position="656"/>
    </location>
</feature>
<feature type="active site" description="N6-AMP-lysine intermediate" evidence="1">
    <location>
        <position position="112"/>
    </location>
</feature>
<feature type="binding site" evidence="1">
    <location>
        <begin position="32"/>
        <end position="36"/>
    </location>
    <ligand>
        <name>NAD(+)</name>
        <dbReference type="ChEBI" id="CHEBI:57540"/>
    </ligand>
</feature>
<feature type="binding site" evidence="1">
    <location>
        <begin position="81"/>
        <end position="82"/>
    </location>
    <ligand>
        <name>NAD(+)</name>
        <dbReference type="ChEBI" id="CHEBI:57540"/>
    </ligand>
</feature>
<feature type="binding site" evidence="1">
    <location>
        <position position="133"/>
    </location>
    <ligand>
        <name>NAD(+)</name>
        <dbReference type="ChEBI" id="CHEBI:57540"/>
    </ligand>
</feature>
<feature type="binding site" evidence="1">
    <location>
        <position position="167"/>
    </location>
    <ligand>
        <name>NAD(+)</name>
        <dbReference type="ChEBI" id="CHEBI:57540"/>
    </ligand>
</feature>
<feature type="binding site" evidence="1">
    <location>
        <position position="306"/>
    </location>
    <ligand>
        <name>NAD(+)</name>
        <dbReference type="ChEBI" id="CHEBI:57540"/>
    </ligand>
</feature>
<feature type="binding site" evidence="1">
    <location>
        <position position="400"/>
    </location>
    <ligand>
        <name>Zn(2+)</name>
        <dbReference type="ChEBI" id="CHEBI:29105"/>
    </ligand>
</feature>
<feature type="binding site" evidence="1">
    <location>
        <position position="403"/>
    </location>
    <ligand>
        <name>Zn(2+)</name>
        <dbReference type="ChEBI" id="CHEBI:29105"/>
    </ligand>
</feature>
<feature type="binding site" evidence="1">
    <location>
        <position position="416"/>
    </location>
    <ligand>
        <name>Zn(2+)</name>
        <dbReference type="ChEBI" id="CHEBI:29105"/>
    </ligand>
</feature>
<feature type="binding site" evidence="1">
    <location>
        <position position="421"/>
    </location>
    <ligand>
        <name>Zn(2+)</name>
        <dbReference type="ChEBI" id="CHEBI:29105"/>
    </ligand>
</feature>
<gene>
    <name evidence="1" type="primary">ligA</name>
    <name type="ordered locus">HPSH_03795</name>
</gene>
<keyword id="KW-0227">DNA damage</keyword>
<keyword id="KW-0234">DNA repair</keyword>
<keyword id="KW-0235">DNA replication</keyword>
<keyword id="KW-0436">Ligase</keyword>
<keyword id="KW-0460">Magnesium</keyword>
<keyword id="KW-0464">Manganese</keyword>
<keyword id="KW-0479">Metal-binding</keyword>
<keyword id="KW-0520">NAD</keyword>
<keyword id="KW-0862">Zinc</keyword>
<comment type="function">
    <text evidence="1">DNA ligase that catalyzes the formation of phosphodiester linkages between 5'-phosphoryl and 3'-hydroxyl groups in double-stranded DNA using NAD as a coenzyme and as the energy source for the reaction. It is essential for DNA replication and repair of damaged DNA.</text>
</comment>
<comment type="catalytic activity">
    <reaction evidence="1">
        <text>NAD(+) + (deoxyribonucleotide)n-3'-hydroxyl + 5'-phospho-(deoxyribonucleotide)m = (deoxyribonucleotide)n+m + AMP + beta-nicotinamide D-nucleotide.</text>
        <dbReference type="EC" id="6.5.1.2"/>
    </reaction>
</comment>
<comment type="cofactor">
    <cofactor evidence="1">
        <name>Mg(2+)</name>
        <dbReference type="ChEBI" id="CHEBI:18420"/>
    </cofactor>
    <cofactor evidence="1">
        <name>Mn(2+)</name>
        <dbReference type="ChEBI" id="CHEBI:29035"/>
    </cofactor>
</comment>
<comment type="similarity">
    <text evidence="1">Belongs to the NAD-dependent DNA ligase family. LigA subfamily.</text>
</comment>
<name>DNLJ_HELPS</name>
<accession>B2UTL2</accession>
<proteinExistence type="inferred from homology"/>
<sequence length="656" mass="73867">MIKSQKEYLERIEYLNTLSHHYYNLDDSIVSDAVYDELYQELKAYEGKNPNSIQANSPTQKVGATTPNSFNKNPHLMRMWSLDDVFNQSELQAWLQRILKAYPSASFVCSPKLDGVSLNLLYQHGKLVKATTRGNGLEGELVSANAKHIANIPHAIAYNGEIEIRGEVIISKKDFDALNKERLNANEPLFANPRNAASGSLRQLDSEITKKRKLQFIPWGVGKHSLNFISFKECLDFIVSLGFSAIQYLSLNKNHQEIEENYHTLIKEREGFFALLDGMVIVVNELNIQKELGYTQKSPKFACAYKFPALEKHTKIVGIINQVGRSGAITPVAVLEPVEIAGAIITKATLHNYSEIEKKNIMLNDRVVVIRSGDVIPKIIKPLESYRDGSQHKIERPKVCPICSHELLCEEIFTYCQNLNCPARLKESLIHFASKDALNIQGLGDKVIEQLFEEKLIFNALDLYALKLEDLMRLDKFKIKKAQNLLDAIQKSKNPPLWRLINALGIEHIGKGASKTLARYGLNVLEKSEAEFLEMEGFGVEMARSLVNFYASNQEFIRSLFDLLNPKNSDMAEEKQESSSVFSNKTIVLTGTLSKPRQEYAQMLENLGAKISSSVSAKTDFLIVGENAGSKLALAKKHGVSVLNEEELLKRLKEFD</sequence>
<protein>
    <recommendedName>
        <fullName evidence="1">DNA ligase</fullName>
        <ecNumber evidence="1">6.5.1.2</ecNumber>
    </recommendedName>
    <alternativeName>
        <fullName evidence="1">Polydeoxyribonucleotide synthase [NAD(+)]</fullName>
    </alternativeName>
</protein>